<reference key="1">
    <citation type="journal article" date="2001" name="Lancet">
        <title>Whole genome sequencing of meticillin-resistant Staphylococcus aureus.</title>
        <authorList>
            <person name="Kuroda M."/>
            <person name="Ohta T."/>
            <person name="Uchiyama I."/>
            <person name="Baba T."/>
            <person name="Yuzawa H."/>
            <person name="Kobayashi I."/>
            <person name="Cui L."/>
            <person name="Oguchi A."/>
            <person name="Aoki K."/>
            <person name="Nagai Y."/>
            <person name="Lian J.-Q."/>
            <person name="Ito T."/>
            <person name="Kanamori M."/>
            <person name="Matsumaru H."/>
            <person name="Maruyama A."/>
            <person name="Murakami H."/>
            <person name="Hosoyama A."/>
            <person name="Mizutani-Ui Y."/>
            <person name="Takahashi N.K."/>
            <person name="Sawano T."/>
            <person name="Inoue R."/>
            <person name="Kaito C."/>
            <person name="Sekimizu K."/>
            <person name="Hirakawa H."/>
            <person name="Kuhara S."/>
            <person name="Goto S."/>
            <person name="Yabuzaki J."/>
            <person name="Kanehisa M."/>
            <person name="Yamashita A."/>
            <person name="Oshima K."/>
            <person name="Furuya K."/>
            <person name="Yoshino C."/>
            <person name="Shiba T."/>
            <person name="Hattori M."/>
            <person name="Ogasawara N."/>
            <person name="Hayashi H."/>
            <person name="Hiramatsu K."/>
        </authorList>
    </citation>
    <scope>NUCLEOTIDE SEQUENCE [LARGE SCALE GENOMIC DNA]</scope>
    <source>
        <strain>N315</strain>
    </source>
</reference>
<reference key="2">
    <citation type="submission" date="2007-10" db="UniProtKB">
        <title>Shotgun proteomic analysis of total and membrane protein extracts of S. aureus strain N315.</title>
        <authorList>
            <person name="Vaezzadeh A.R."/>
            <person name="Deshusses J."/>
            <person name="Lescuyer P."/>
            <person name="Hochstrasser D.F."/>
        </authorList>
    </citation>
    <scope>IDENTIFICATION BY MASS SPECTROMETRY [LARGE SCALE ANALYSIS]</scope>
    <source>
        <strain>N315</strain>
    </source>
</reference>
<evidence type="ECO:0000255" key="1">
    <source>
        <dbReference type="HAMAP-Rule" id="MF_00480"/>
    </source>
</evidence>
<evidence type="ECO:0000305" key="2"/>
<keyword id="KW-0687">Ribonucleoprotein</keyword>
<keyword id="KW-0689">Ribosomal protein</keyword>
<keyword id="KW-0694">RNA-binding</keyword>
<keyword id="KW-0699">rRNA-binding</keyword>
<keyword id="KW-0820">tRNA-binding</keyword>
<feature type="chain" id="PRO_0000124343" description="Small ribosomal subunit protein uS7">
    <location>
        <begin position="1"/>
        <end position="156"/>
    </location>
</feature>
<dbReference type="EMBL" id="BA000018">
    <property type="protein sequence ID" value="BAB41735.1"/>
    <property type="molecule type" value="Genomic_DNA"/>
</dbReference>
<dbReference type="PIR" id="D89822">
    <property type="entry name" value="D89822"/>
</dbReference>
<dbReference type="RefSeq" id="WP_001137495.1">
    <property type="nucleotide sequence ID" value="NC_002745.2"/>
</dbReference>
<dbReference type="SMR" id="P66616"/>
<dbReference type="EnsemblBacteria" id="BAB41735">
    <property type="protein sequence ID" value="BAB41735"/>
    <property type="gene ID" value="BAB41735"/>
</dbReference>
<dbReference type="GeneID" id="98344880"/>
<dbReference type="KEGG" id="sau:SA0504"/>
<dbReference type="HOGENOM" id="CLU_072226_1_1_9"/>
<dbReference type="GO" id="GO:0015935">
    <property type="term" value="C:small ribosomal subunit"/>
    <property type="evidence" value="ECO:0007669"/>
    <property type="project" value="InterPro"/>
</dbReference>
<dbReference type="GO" id="GO:0019843">
    <property type="term" value="F:rRNA binding"/>
    <property type="evidence" value="ECO:0007669"/>
    <property type="project" value="UniProtKB-UniRule"/>
</dbReference>
<dbReference type="GO" id="GO:0003735">
    <property type="term" value="F:structural constituent of ribosome"/>
    <property type="evidence" value="ECO:0007669"/>
    <property type="project" value="InterPro"/>
</dbReference>
<dbReference type="GO" id="GO:0000049">
    <property type="term" value="F:tRNA binding"/>
    <property type="evidence" value="ECO:0007669"/>
    <property type="project" value="UniProtKB-UniRule"/>
</dbReference>
<dbReference type="GO" id="GO:0006412">
    <property type="term" value="P:translation"/>
    <property type="evidence" value="ECO:0007669"/>
    <property type="project" value="UniProtKB-UniRule"/>
</dbReference>
<dbReference type="CDD" id="cd14869">
    <property type="entry name" value="uS7_Bacteria"/>
    <property type="match status" value="1"/>
</dbReference>
<dbReference type="FunFam" id="1.10.455.10:FF:000001">
    <property type="entry name" value="30S ribosomal protein S7"/>
    <property type="match status" value="1"/>
</dbReference>
<dbReference type="Gene3D" id="1.10.455.10">
    <property type="entry name" value="Ribosomal protein S7 domain"/>
    <property type="match status" value="1"/>
</dbReference>
<dbReference type="HAMAP" id="MF_00480_B">
    <property type="entry name" value="Ribosomal_uS7_B"/>
    <property type="match status" value="1"/>
</dbReference>
<dbReference type="InterPro" id="IPR000235">
    <property type="entry name" value="Ribosomal_uS7"/>
</dbReference>
<dbReference type="InterPro" id="IPR005717">
    <property type="entry name" value="Ribosomal_uS7_bac/org-type"/>
</dbReference>
<dbReference type="InterPro" id="IPR020606">
    <property type="entry name" value="Ribosomal_uS7_CS"/>
</dbReference>
<dbReference type="InterPro" id="IPR023798">
    <property type="entry name" value="Ribosomal_uS7_dom"/>
</dbReference>
<dbReference type="InterPro" id="IPR036823">
    <property type="entry name" value="Ribosomal_uS7_dom_sf"/>
</dbReference>
<dbReference type="NCBIfam" id="TIGR01029">
    <property type="entry name" value="rpsG_bact"/>
    <property type="match status" value="1"/>
</dbReference>
<dbReference type="PANTHER" id="PTHR11205">
    <property type="entry name" value="RIBOSOMAL PROTEIN S7"/>
    <property type="match status" value="1"/>
</dbReference>
<dbReference type="Pfam" id="PF00177">
    <property type="entry name" value="Ribosomal_S7"/>
    <property type="match status" value="1"/>
</dbReference>
<dbReference type="PIRSF" id="PIRSF002122">
    <property type="entry name" value="RPS7p_RPS7a_RPS5e_RPS7o"/>
    <property type="match status" value="1"/>
</dbReference>
<dbReference type="SUPFAM" id="SSF47973">
    <property type="entry name" value="Ribosomal protein S7"/>
    <property type="match status" value="1"/>
</dbReference>
<dbReference type="PROSITE" id="PS00052">
    <property type="entry name" value="RIBOSOMAL_S7"/>
    <property type="match status" value="1"/>
</dbReference>
<sequence>MPRKGSVPKRDVLPDPIHNSKLVTKLINKIMLDGKRGTAQRILYSAFDLVEQRSGRDALEVFEEAINNIMPVLEVKARRVGGSNYQVPVEVRPERRTTLGLRWLVNYARLRGEKTMEDRLANEILDAANNTGGAVKKREDTHKMAEANKAFAHYRW</sequence>
<comment type="function">
    <text evidence="1">One of the primary rRNA binding proteins, it binds directly to 16S rRNA where it nucleates assembly of the head domain of the 30S subunit. Is located at the subunit interface close to the decoding center, probably blocks exit of the E-site tRNA.</text>
</comment>
<comment type="subunit">
    <text evidence="1">Part of the 30S ribosomal subunit. Contacts proteins S9 and S11.</text>
</comment>
<comment type="similarity">
    <text evidence="1">Belongs to the universal ribosomal protein uS7 family.</text>
</comment>
<accession>P66616</accession>
<accession>Q99W62</accession>
<name>RS7_STAAN</name>
<organism>
    <name type="scientific">Staphylococcus aureus (strain N315)</name>
    <dbReference type="NCBI Taxonomy" id="158879"/>
    <lineage>
        <taxon>Bacteria</taxon>
        <taxon>Bacillati</taxon>
        <taxon>Bacillota</taxon>
        <taxon>Bacilli</taxon>
        <taxon>Bacillales</taxon>
        <taxon>Staphylococcaceae</taxon>
        <taxon>Staphylococcus</taxon>
    </lineage>
</organism>
<gene>
    <name evidence="1" type="primary">rpsG</name>
    <name type="ordered locus">SA0504</name>
</gene>
<protein>
    <recommendedName>
        <fullName evidence="1">Small ribosomal subunit protein uS7</fullName>
    </recommendedName>
    <alternativeName>
        <fullName evidence="2">30S ribosomal protein S7</fullName>
    </alternativeName>
</protein>
<proteinExistence type="evidence at protein level"/>